<gene>
    <name evidence="1" type="primary">lptE</name>
    <name type="synonym">rlpB</name>
    <name type="ordered locus">YPTS_1159</name>
</gene>
<evidence type="ECO:0000255" key="1">
    <source>
        <dbReference type="HAMAP-Rule" id="MF_01186"/>
    </source>
</evidence>
<evidence type="ECO:0000256" key="2">
    <source>
        <dbReference type="SAM" id="MobiDB-lite"/>
    </source>
</evidence>
<feature type="signal peptide" evidence="1">
    <location>
        <begin position="1"/>
        <end position="19"/>
    </location>
</feature>
<feature type="chain" id="PRO_1000138283" description="LPS-assembly lipoprotein LptE">
    <location>
        <begin position="20"/>
        <end position="207"/>
    </location>
</feature>
<feature type="region of interest" description="Disordered" evidence="2">
    <location>
        <begin position="168"/>
        <end position="207"/>
    </location>
</feature>
<feature type="compositionally biased region" description="Polar residues" evidence="2">
    <location>
        <begin position="182"/>
        <end position="207"/>
    </location>
</feature>
<feature type="lipid moiety-binding region" description="N-palmitoyl cysteine" evidence="1">
    <location>
        <position position="20"/>
    </location>
</feature>
<feature type="lipid moiety-binding region" description="S-diacylglycerol cysteine" evidence="1">
    <location>
        <position position="20"/>
    </location>
</feature>
<proteinExistence type="inferred from homology"/>
<reference key="1">
    <citation type="submission" date="2008-04" db="EMBL/GenBank/DDBJ databases">
        <title>Complete sequence of Yersinia pseudotuberculosis PB1/+.</title>
        <authorList>
            <person name="Copeland A."/>
            <person name="Lucas S."/>
            <person name="Lapidus A."/>
            <person name="Glavina del Rio T."/>
            <person name="Dalin E."/>
            <person name="Tice H."/>
            <person name="Bruce D."/>
            <person name="Goodwin L."/>
            <person name="Pitluck S."/>
            <person name="Munk A.C."/>
            <person name="Brettin T."/>
            <person name="Detter J.C."/>
            <person name="Han C."/>
            <person name="Tapia R."/>
            <person name="Schmutz J."/>
            <person name="Larimer F."/>
            <person name="Land M."/>
            <person name="Hauser L."/>
            <person name="Challacombe J.F."/>
            <person name="Green L."/>
            <person name="Lindler L.E."/>
            <person name="Nikolich M.P."/>
            <person name="Richardson P."/>
        </authorList>
    </citation>
    <scope>NUCLEOTIDE SEQUENCE [LARGE SCALE GENOMIC DNA]</scope>
    <source>
        <strain>PB1/+</strain>
    </source>
</reference>
<name>LPTE_YERPB</name>
<keyword id="KW-0998">Cell outer membrane</keyword>
<keyword id="KW-0449">Lipoprotein</keyword>
<keyword id="KW-0472">Membrane</keyword>
<keyword id="KW-0564">Palmitate</keyword>
<keyword id="KW-0732">Signal</keyword>
<organism>
    <name type="scientific">Yersinia pseudotuberculosis serotype IB (strain PB1/+)</name>
    <dbReference type="NCBI Taxonomy" id="502801"/>
    <lineage>
        <taxon>Bacteria</taxon>
        <taxon>Pseudomonadati</taxon>
        <taxon>Pseudomonadota</taxon>
        <taxon>Gammaproteobacteria</taxon>
        <taxon>Enterobacterales</taxon>
        <taxon>Yersiniaceae</taxon>
        <taxon>Yersinia</taxon>
    </lineage>
</organism>
<sequence length="207" mass="22570">MRHRILTLLLGLAVLVTAGCGFNLRGTTQVPTELQKLLLESSDPYGPLARSIRQQLRLNNVTIVDDAMRKDIPTLRIIGSSESQETVSIFRNGVAAENQLVLHVQAQVLIPGHDIYPLQVNVFRTFFDNPLTALAKEAEAEVLRQEMREQAAQQLVRQLLTVHAAEVKNTQKNGDKPVSDANAAQGSTPTAVNETTLGEPAVSTSAK</sequence>
<protein>
    <recommendedName>
        <fullName evidence="1">LPS-assembly lipoprotein LptE</fullName>
    </recommendedName>
</protein>
<comment type="function">
    <text evidence="1">Together with LptD, is involved in the assembly of lipopolysaccharide (LPS) at the surface of the outer membrane. Required for the proper assembly of LptD. Binds LPS and may serve as the LPS recognition site at the outer membrane.</text>
</comment>
<comment type="subunit">
    <text evidence="1">Component of the lipopolysaccharide transport and assembly complex. Interacts with LptD.</text>
</comment>
<comment type="subcellular location">
    <subcellularLocation>
        <location evidence="1">Cell outer membrane</location>
        <topology evidence="1">Lipid-anchor</topology>
    </subcellularLocation>
</comment>
<comment type="similarity">
    <text evidence="1">Belongs to the LptE lipoprotein family.</text>
</comment>
<dbReference type="EMBL" id="CP001048">
    <property type="protein sequence ID" value="ACC88135.1"/>
    <property type="molecule type" value="Genomic_DNA"/>
</dbReference>
<dbReference type="RefSeq" id="WP_002210332.1">
    <property type="nucleotide sequence ID" value="NZ_CP009780.1"/>
</dbReference>
<dbReference type="SMR" id="B2K885"/>
<dbReference type="GeneID" id="57976086"/>
<dbReference type="KEGG" id="ypb:YPTS_1159"/>
<dbReference type="PATRIC" id="fig|502801.10.peg.505"/>
<dbReference type="GO" id="GO:0009279">
    <property type="term" value="C:cell outer membrane"/>
    <property type="evidence" value="ECO:0007669"/>
    <property type="project" value="UniProtKB-SubCell"/>
</dbReference>
<dbReference type="GO" id="GO:1990351">
    <property type="term" value="C:transporter complex"/>
    <property type="evidence" value="ECO:0007669"/>
    <property type="project" value="TreeGrafter"/>
</dbReference>
<dbReference type="GO" id="GO:0001530">
    <property type="term" value="F:lipopolysaccharide binding"/>
    <property type="evidence" value="ECO:0007669"/>
    <property type="project" value="TreeGrafter"/>
</dbReference>
<dbReference type="GO" id="GO:0043165">
    <property type="term" value="P:Gram-negative-bacterium-type cell outer membrane assembly"/>
    <property type="evidence" value="ECO:0007669"/>
    <property type="project" value="UniProtKB-UniRule"/>
</dbReference>
<dbReference type="GO" id="GO:0015920">
    <property type="term" value="P:lipopolysaccharide transport"/>
    <property type="evidence" value="ECO:0007669"/>
    <property type="project" value="TreeGrafter"/>
</dbReference>
<dbReference type="Gene3D" id="3.30.160.150">
    <property type="entry name" value="Lipoprotein like domain"/>
    <property type="match status" value="1"/>
</dbReference>
<dbReference type="HAMAP" id="MF_01186">
    <property type="entry name" value="LPS_assembly_LptE"/>
    <property type="match status" value="1"/>
</dbReference>
<dbReference type="InterPro" id="IPR007485">
    <property type="entry name" value="LPS_assembly_LptE"/>
</dbReference>
<dbReference type="NCBIfam" id="NF008062">
    <property type="entry name" value="PRK10796.1"/>
    <property type="match status" value="1"/>
</dbReference>
<dbReference type="PANTHER" id="PTHR38098">
    <property type="entry name" value="LPS-ASSEMBLY LIPOPROTEIN LPTE"/>
    <property type="match status" value="1"/>
</dbReference>
<dbReference type="PANTHER" id="PTHR38098:SF1">
    <property type="entry name" value="LPS-ASSEMBLY LIPOPROTEIN LPTE"/>
    <property type="match status" value="1"/>
</dbReference>
<dbReference type="Pfam" id="PF04390">
    <property type="entry name" value="LptE"/>
    <property type="match status" value="1"/>
</dbReference>
<dbReference type="PROSITE" id="PS51257">
    <property type="entry name" value="PROKAR_LIPOPROTEIN"/>
    <property type="match status" value="1"/>
</dbReference>
<accession>B2K885</accession>